<name>ARCA2_ECOL6</name>
<organism>
    <name type="scientific">Escherichia coli O6:H1 (strain CFT073 / ATCC 700928 / UPEC)</name>
    <dbReference type="NCBI Taxonomy" id="199310"/>
    <lineage>
        <taxon>Bacteria</taxon>
        <taxon>Pseudomonadati</taxon>
        <taxon>Pseudomonadota</taxon>
        <taxon>Gammaproteobacteria</taxon>
        <taxon>Enterobacterales</taxon>
        <taxon>Enterobacteriaceae</taxon>
        <taxon>Escherichia</taxon>
    </lineage>
</organism>
<gene>
    <name type="primary">arcA</name>
    <name type="ordered locus">c5350</name>
</gene>
<evidence type="ECO:0000250" key="1"/>
<evidence type="ECO:0000305" key="2"/>
<comment type="catalytic activity">
    <reaction>
        <text>L-arginine + H2O = L-citrulline + NH4(+)</text>
        <dbReference type="Rhea" id="RHEA:19597"/>
        <dbReference type="ChEBI" id="CHEBI:15377"/>
        <dbReference type="ChEBI" id="CHEBI:28938"/>
        <dbReference type="ChEBI" id="CHEBI:32682"/>
        <dbReference type="ChEBI" id="CHEBI:57743"/>
        <dbReference type="EC" id="3.5.3.6"/>
    </reaction>
</comment>
<comment type="pathway">
    <text>Amino-acid degradation; L-arginine degradation via ADI pathway; carbamoyl phosphate from L-arginine: step 1/2.</text>
</comment>
<comment type="subcellular location">
    <subcellularLocation>
        <location evidence="1">Cytoplasm</location>
    </subcellularLocation>
</comment>
<comment type="similarity">
    <text evidence="2">Belongs to the arginine deiminase family.</text>
</comment>
<comment type="caution">
    <text evidence="2">There are two genes termed arcA in strain O6 of E.coli, one refers to an arginine deiminase and the other to a two-component regulator.</text>
</comment>
<sequence>MMEKHYVGSEIGQLRSVMLHRPNLSLKRLTPSNCQELLFDDVLSVERAGEEHDIFANTLRQQGIEVLLLTDLLTQTLDIPEAKSWLLETQISDYRLGPTFATDVRTWLAEMSHRDLARHLSGGLTYSEIPASIKNMVVDTHDINDFIMKPLPNHLFTRDTSCWIYNGVSINPMAKPARQRETNNLRAIYRWHPQFAGGEFIKYFGDENINYDHATLEGGDVLVIGRGAVLIGMSERTTPQGIEFLAQALFKHRQAERVIAVELPKHRSCMHLDTVMTHIDIDTFSVYPEVVRPDVNCWTLTPDGHGGLKRTQESTLLHAIEKALGIDQVRLITTGGDAFEAEREQWNDANNVLTLRPGVVVGYERNIWTNEKYDKAGITVLPIPGDELGRGRGGARCMSCPLHRDGI</sequence>
<proteinExistence type="inferred from homology"/>
<dbReference type="EC" id="3.5.3.6"/>
<dbReference type="EMBL" id="AE014075">
    <property type="protein sequence ID" value="AAN83772.1"/>
    <property type="molecule type" value="Genomic_DNA"/>
</dbReference>
<dbReference type="SMR" id="Q8FAD9"/>
<dbReference type="STRING" id="199310.c5350"/>
<dbReference type="KEGG" id="ecc:c5350"/>
<dbReference type="eggNOG" id="COG2235">
    <property type="taxonomic scope" value="Bacteria"/>
</dbReference>
<dbReference type="HOGENOM" id="CLU_052662_0_0_6"/>
<dbReference type="BioCyc" id="ECOL199310:C5350-MONOMER"/>
<dbReference type="UniPathway" id="UPA00254">
    <property type="reaction ID" value="UER00364"/>
</dbReference>
<dbReference type="Proteomes" id="UP000001410">
    <property type="component" value="Chromosome"/>
</dbReference>
<dbReference type="GO" id="GO:0005737">
    <property type="term" value="C:cytoplasm"/>
    <property type="evidence" value="ECO:0007669"/>
    <property type="project" value="UniProtKB-SubCell"/>
</dbReference>
<dbReference type="GO" id="GO:0016990">
    <property type="term" value="F:arginine deiminase activity"/>
    <property type="evidence" value="ECO:0007669"/>
    <property type="project" value="UniProtKB-UniRule"/>
</dbReference>
<dbReference type="GO" id="GO:0019547">
    <property type="term" value="P:arginine catabolic process to ornithine"/>
    <property type="evidence" value="ECO:0007669"/>
    <property type="project" value="UniProtKB-UniRule"/>
</dbReference>
<dbReference type="GO" id="GO:0019546">
    <property type="term" value="P:arginine deiminase pathway"/>
    <property type="evidence" value="ECO:0007669"/>
    <property type="project" value="TreeGrafter"/>
</dbReference>
<dbReference type="FunFam" id="1.10.3930.10:FF:000002">
    <property type="entry name" value="Arginine deiminase"/>
    <property type="match status" value="1"/>
</dbReference>
<dbReference type="Gene3D" id="1.10.3930.10">
    <property type="entry name" value="Arginine deiminase"/>
    <property type="match status" value="1"/>
</dbReference>
<dbReference type="Gene3D" id="3.75.10.10">
    <property type="entry name" value="L-arginine/glycine Amidinotransferase, Chain A"/>
    <property type="match status" value="1"/>
</dbReference>
<dbReference type="HAMAP" id="MF_00242">
    <property type="entry name" value="Arg_deiminase"/>
    <property type="match status" value="1"/>
</dbReference>
<dbReference type="InterPro" id="IPR003876">
    <property type="entry name" value="Arg_deiminase"/>
</dbReference>
<dbReference type="NCBIfam" id="TIGR01078">
    <property type="entry name" value="arcA"/>
    <property type="match status" value="1"/>
</dbReference>
<dbReference type="NCBIfam" id="NF002381">
    <property type="entry name" value="PRK01388.1"/>
    <property type="match status" value="1"/>
</dbReference>
<dbReference type="PANTHER" id="PTHR47271">
    <property type="entry name" value="ARGININE DEIMINASE"/>
    <property type="match status" value="1"/>
</dbReference>
<dbReference type="PANTHER" id="PTHR47271:SF2">
    <property type="entry name" value="ARGININE DEIMINASE"/>
    <property type="match status" value="1"/>
</dbReference>
<dbReference type="Pfam" id="PF02274">
    <property type="entry name" value="ADI"/>
    <property type="match status" value="1"/>
</dbReference>
<dbReference type="PIRSF" id="PIRSF006356">
    <property type="entry name" value="Arg_deiminase"/>
    <property type="match status" value="1"/>
</dbReference>
<dbReference type="PRINTS" id="PR01466">
    <property type="entry name" value="ARGDEIMINASE"/>
</dbReference>
<dbReference type="SUPFAM" id="SSF55909">
    <property type="entry name" value="Pentein"/>
    <property type="match status" value="1"/>
</dbReference>
<accession>Q8FAD9</accession>
<feature type="chain" id="PRO_0000182210" description="Arginine deiminase">
    <location>
        <begin position="1"/>
        <end position="407"/>
    </location>
</feature>
<feature type="active site" description="Amidino-cysteine intermediate" evidence="1">
    <location>
        <position position="397"/>
    </location>
</feature>
<reference key="1">
    <citation type="journal article" date="2002" name="Proc. Natl. Acad. Sci. U.S.A.">
        <title>Extensive mosaic structure revealed by the complete genome sequence of uropathogenic Escherichia coli.</title>
        <authorList>
            <person name="Welch R.A."/>
            <person name="Burland V."/>
            <person name="Plunkett G. III"/>
            <person name="Redford P."/>
            <person name="Roesch P."/>
            <person name="Rasko D."/>
            <person name="Buckles E.L."/>
            <person name="Liou S.-R."/>
            <person name="Boutin A."/>
            <person name="Hackett J."/>
            <person name="Stroud D."/>
            <person name="Mayhew G.F."/>
            <person name="Rose D.J."/>
            <person name="Zhou S."/>
            <person name="Schwartz D.C."/>
            <person name="Perna N.T."/>
            <person name="Mobley H.L.T."/>
            <person name="Donnenberg M.S."/>
            <person name="Blattner F.R."/>
        </authorList>
    </citation>
    <scope>NUCLEOTIDE SEQUENCE [LARGE SCALE GENOMIC DNA]</scope>
    <source>
        <strain>CFT073 / ATCC 700928 / UPEC</strain>
    </source>
</reference>
<protein>
    <recommendedName>
        <fullName>Arginine deiminase</fullName>
        <shortName>ADI</shortName>
        <ecNumber>3.5.3.6</ecNumber>
    </recommendedName>
    <alternativeName>
        <fullName>Arginine dihydrolase</fullName>
        <shortName>AD</shortName>
    </alternativeName>
</protein>
<keyword id="KW-0056">Arginine metabolism</keyword>
<keyword id="KW-0963">Cytoplasm</keyword>
<keyword id="KW-0378">Hydrolase</keyword>
<keyword id="KW-1185">Reference proteome</keyword>